<gene>
    <name evidence="1" type="primary">rpmB</name>
    <name type="ordered locus">SYO3AOP1_0861</name>
</gene>
<reference key="1">
    <citation type="journal article" date="2009" name="J. Bacteriol.">
        <title>Complete and draft genome sequences of six members of the Aquificales.</title>
        <authorList>
            <person name="Reysenbach A.-L."/>
            <person name="Hamamura N."/>
            <person name="Podar M."/>
            <person name="Griffiths E."/>
            <person name="Ferreira S."/>
            <person name="Hochstein R."/>
            <person name="Heidelberg J."/>
            <person name="Johnson J."/>
            <person name="Mead D."/>
            <person name="Pohorille A."/>
            <person name="Sarmiento M."/>
            <person name="Schweighofer K."/>
            <person name="Seshadri R."/>
            <person name="Voytek M.A."/>
        </authorList>
    </citation>
    <scope>NUCLEOTIDE SEQUENCE [LARGE SCALE GENOMIC DNA]</scope>
    <source>
        <strain>YO3AOP1</strain>
    </source>
</reference>
<name>RL28_SULSY</name>
<organism>
    <name type="scientific">Sulfurihydrogenibium sp. (strain YO3AOP1)</name>
    <dbReference type="NCBI Taxonomy" id="436114"/>
    <lineage>
        <taxon>Bacteria</taxon>
        <taxon>Pseudomonadati</taxon>
        <taxon>Aquificota</taxon>
        <taxon>Aquificia</taxon>
        <taxon>Aquificales</taxon>
        <taxon>Hydrogenothermaceae</taxon>
        <taxon>Sulfurihydrogenibium</taxon>
    </lineage>
</organism>
<accession>B2V966</accession>
<comment type="similarity">
    <text evidence="1">Belongs to the bacterial ribosomal protein bL28 family.</text>
</comment>
<keyword id="KW-0687">Ribonucleoprotein</keyword>
<keyword id="KW-0689">Ribosomal protein</keyword>
<sequence>MAVCQICGKKTVFGNTVAHSATTERRTWKPNLRRVRVVLEDGSTKRIYVCAKCLKAGKVKKAV</sequence>
<evidence type="ECO:0000255" key="1">
    <source>
        <dbReference type="HAMAP-Rule" id="MF_00373"/>
    </source>
</evidence>
<evidence type="ECO:0000305" key="2"/>
<protein>
    <recommendedName>
        <fullName evidence="1">Large ribosomal subunit protein bL28</fullName>
    </recommendedName>
    <alternativeName>
        <fullName evidence="2">50S ribosomal protein L28</fullName>
    </alternativeName>
</protein>
<feature type="chain" id="PRO_1000121698" description="Large ribosomal subunit protein bL28">
    <location>
        <begin position="1"/>
        <end position="63"/>
    </location>
</feature>
<dbReference type="EMBL" id="CP001080">
    <property type="protein sequence ID" value="ACD66489.1"/>
    <property type="molecule type" value="Genomic_DNA"/>
</dbReference>
<dbReference type="RefSeq" id="WP_012459563.1">
    <property type="nucleotide sequence ID" value="NC_010730.1"/>
</dbReference>
<dbReference type="SMR" id="B2V966"/>
<dbReference type="STRING" id="436114.SYO3AOP1_0861"/>
<dbReference type="KEGG" id="sul:SYO3AOP1_0861"/>
<dbReference type="eggNOG" id="COG0227">
    <property type="taxonomic scope" value="Bacteria"/>
</dbReference>
<dbReference type="HOGENOM" id="CLU_064548_7_0_0"/>
<dbReference type="GO" id="GO:1990904">
    <property type="term" value="C:ribonucleoprotein complex"/>
    <property type="evidence" value="ECO:0007669"/>
    <property type="project" value="UniProtKB-KW"/>
</dbReference>
<dbReference type="GO" id="GO:0005840">
    <property type="term" value="C:ribosome"/>
    <property type="evidence" value="ECO:0007669"/>
    <property type="project" value="UniProtKB-KW"/>
</dbReference>
<dbReference type="GO" id="GO:0003735">
    <property type="term" value="F:structural constituent of ribosome"/>
    <property type="evidence" value="ECO:0007669"/>
    <property type="project" value="InterPro"/>
</dbReference>
<dbReference type="GO" id="GO:0006412">
    <property type="term" value="P:translation"/>
    <property type="evidence" value="ECO:0007669"/>
    <property type="project" value="UniProtKB-UniRule"/>
</dbReference>
<dbReference type="Gene3D" id="2.30.170.40">
    <property type="entry name" value="Ribosomal protein L28/L24"/>
    <property type="match status" value="1"/>
</dbReference>
<dbReference type="HAMAP" id="MF_00373">
    <property type="entry name" value="Ribosomal_bL28"/>
    <property type="match status" value="1"/>
</dbReference>
<dbReference type="InterPro" id="IPR050096">
    <property type="entry name" value="Bacterial_rp_bL28"/>
</dbReference>
<dbReference type="InterPro" id="IPR026569">
    <property type="entry name" value="Ribosomal_bL28"/>
</dbReference>
<dbReference type="InterPro" id="IPR034704">
    <property type="entry name" value="Ribosomal_bL28/bL31-like_sf"/>
</dbReference>
<dbReference type="InterPro" id="IPR001383">
    <property type="entry name" value="Ribosomal_bL28_bact-type"/>
</dbReference>
<dbReference type="InterPro" id="IPR037147">
    <property type="entry name" value="Ribosomal_bL28_sf"/>
</dbReference>
<dbReference type="NCBIfam" id="TIGR00009">
    <property type="entry name" value="L28"/>
    <property type="match status" value="1"/>
</dbReference>
<dbReference type="PANTHER" id="PTHR39080">
    <property type="entry name" value="50S RIBOSOMAL PROTEIN L28"/>
    <property type="match status" value="1"/>
</dbReference>
<dbReference type="PANTHER" id="PTHR39080:SF1">
    <property type="entry name" value="LARGE RIBOSOMAL SUBUNIT PROTEIN BL28A"/>
    <property type="match status" value="1"/>
</dbReference>
<dbReference type="Pfam" id="PF00830">
    <property type="entry name" value="Ribosomal_L28"/>
    <property type="match status" value="1"/>
</dbReference>
<dbReference type="SUPFAM" id="SSF143800">
    <property type="entry name" value="L28p-like"/>
    <property type="match status" value="1"/>
</dbReference>
<proteinExistence type="inferred from homology"/>